<accession>Q2FV31</accession>
<proteinExistence type="evidence at protein level"/>
<organism>
    <name type="scientific">Staphylococcus aureus (strain NCTC 8325 / PS 47)</name>
    <dbReference type="NCBI Taxonomy" id="93061"/>
    <lineage>
        <taxon>Bacteria</taxon>
        <taxon>Bacillati</taxon>
        <taxon>Bacillota</taxon>
        <taxon>Bacilli</taxon>
        <taxon>Bacillales</taxon>
        <taxon>Staphylococcaceae</taxon>
        <taxon>Staphylococcus</taxon>
    </lineage>
</organism>
<evidence type="ECO:0000250" key="1">
    <source>
        <dbReference type="UniProtKB" id="P9WI99"/>
    </source>
</evidence>
<evidence type="ECO:0000250" key="2">
    <source>
        <dbReference type="UniProtKB" id="Q9HA64"/>
    </source>
</evidence>
<evidence type="ECO:0000269" key="3">
    <source>
    </source>
</evidence>
<evidence type="ECO:0000305" key="4"/>
<evidence type="ECO:0000312" key="5">
    <source>
        <dbReference type="EMBL" id="ABD31904.1"/>
    </source>
</evidence>
<comment type="function">
    <text evidence="3">Ketoamine kinase that phosphorylates ketoamines, such as erythruloselysine and ribuloselysine, on the third carbon of the sugar moiety to generate ketoamine 3-phosphate (PubMed:17681011). Has higher activity on free lysine (erythruloselysine and ribuloselysine), than on ribuloselysine and erythruloselysine residues on glycated proteins (PubMed:17681011).</text>
</comment>
<comment type="catalytic activity">
    <reaction evidence="3">
        <text>N(6)-(D-ribulosyl)-L-lysine + ATP = N(6)-(3-O-phospho-D-ribulosyl)-L-lysine + ADP + H(+)</text>
        <dbReference type="Rhea" id="RHEA:61400"/>
        <dbReference type="ChEBI" id="CHEBI:15378"/>
        <dbReference type="ChEBI" id="CHEBI:30616"/>
        <dbReference type="ChEBI" id="CHEBI:144590"/>
        <dbReference type="ChEBI" id="CHEBI:144611"/>
        <dbReference type="ChEBI" id="CHEBI:456216"/>
    </reaction>
    <physiologicalReaction direction="left-to-right" evidence="3">
        <dbReference type="Rhea" id="RHEA:61401"/>
    </physiologicalReaction>
</comment>
<comment type="catalytic activity">
    <reaction evidence="3">
        <text>N(6)-(D-erythrulosyl)-L-lysine + ATP = N(6)-(3-O-phospho-D-erythrulosyl)-L-lysine + ADP + H(+)</text>
        <dbReference type="Rhea" id="RHEA:61408"/>
        <dbReference type="ChEBI" id="CHEBI:15378"/>
        <dbReference type="ChEBI" id="CHEBI:30616"/>
        <dbReference type="ChEBI" id="CHEBI:144617"/>
        <dbReference type="ChEBI" id="CHEBI:144618"/>
        <dbReference type="ChEBI" id="CHEBI:456216"/>
    </reaction>
    <physiologicalReaction direction="left-to-right" evidence="3">
        <dbReference type="Rhea" id="RHEA:61409"/>
    </physiologicalReaction>
</comment>
<comment type="catalytic activity">
    <reaction evidence="3">
        <text>N(6)-D-ribulosyl-L-lysyl-[protein] + ATP = N(6)-(3-O-phospho-D-ribulosyl)-L-lysyl-[protein] + ADP + H(+)</text>
        <dbReference type="Rhea" id="RHEA:48432"/>
        <dbReference type="Rhea" id="RHEA-COMP:12103"/>
        <dbReference type="Rhea" id="RHEA-COMP:12104"/>
        <dbReference type="ChEBI" id="CHEBI:15378"/>
        <dbReference type="ChEBI" id="CHEBI:30616"/>
        <dbReference type="ChEBI" id="CHEBI:90418"/>
        <dbReference type="ChEBI" id="CHEBI:90420"/>
        <dbReference type="ChEBI" id="CHEBI:456216"/>
    </reaction>
    <physiologicalReaction direction="left-to-right" evidence="3">
        <dbReference type="Rhea" id="RHEA:48433"/>
    </physiologicalReaction>
</comment>
<comment type="catalytic activity">
    <reaction evidence="3">
        <text>N(6)-(D-erythrulosyl)-L-lysyl-[protein] + ATP = N(6)-(3-O-phospho-D-erythrulosyl)-L-lysyl-[protein] + ADP + H(+)</text>
        <dbReference type="Rhea" id="RHEA:61396"/>
        <dbReference type="Rhea" id="RHEA-COMP:15794"/>
        <dbReference type="Rhea" id="RHEA-COMP:15799"/>
        <dbReference type="ChEBI" id="CHEBI:15378"/>
        <dbReference type="ChEBI" id="CHEBI:30616"/>
        <dbReference type="ChEBI" id="CHEBI:144587"/>
        <dbReference type="ChEBI" id="CHEBI:144624"/>
        <dbReference type="ChEBI" id="CHEBI:456216"/>
    </reaction>
    <physiologicalReaction direction="left-to-right" evidence="3">
        <dbReference type="Rhea" id="RHEA:61397"/>
    </physiologicalReaction>
</comment>
<comment type="biophysicochemical properties">
    <kinetics>
        <KM evidence="3">58 uM for free ribuloselysine</KM>
        <KM evidence="3">13 uM for free erythruloselysine</KM>
        <KM evidence="3">44 uM for ribuloselysyl-protein</KM>
        <KM evidence="3">42 uM for erythruloselysyl-protein</KM>
        <Vmax evidence="3">1300.0 nmol/min/mg enzyme with free ribuloselysine as substrate</Vmax>
        <Vmax evidence="3">1930.0 nmol/min/mg enzyme with free erythruloselysine as substrate</Vmax>
        <Vmax evidence="3">220.0 nmol/min/mg enzyme with ribuloselysyl-protein (lysozyme) as substrate</Vmax>
        <Vmax evidence="3">78.0 nmol/min/mg enzyme with erythruloselysyl-protein (lysozyme) as substrate</Vmax>
    </kinetics>
</comment>
<comment type="similarity">
    <text evidence="4">Belongs to the fructosamine kinase family.</text>
</comment>
<reference key="1">
    <citation type="book" date="2006" name="Gram positive pathogens, 2nd edition">
        <title>The Staphylococcus aureus NCTC 8325 genome.</title>
        <editorList>
            <person name="Fischetti V."/>
            <person name="Novick R."/>
            <person name="Ferretti J."/>
            <person name="Portnoy D."/>
            <person name="Rood J."/>
        </editorList>
        <authorList>
            <person name="Gillaspy A.F."/>
            <person name="Worrell V."/>
            <person name="Orvis J."/>
            <person name="Roe B.A."/>
            <person name="Dyer D.W."/>
            <person name="Iandolo J.J."/>
        </authorList>
    </citation>
    <scope>NUCLEOTIDE SEQUENCE [LARGE SCALE GENOMIC DNA]</scope>
    <source>
        <strain>NCTC 8325 / PS 47</strain>
    </source>
</reference>
<reference key="2">
    <citation type="journal article" date="2007" name="FEBS J.">
        <title>Many fructosamine 3-kinase homologues in bacteria are ribulosamine/erythrulosamine 3-kinases potentially involved in protein deglycation.</title>
        <authorList>
            <person name="Gemayel R."/>
            <person name="Fortpied J."/>
            <person name="Rzem R."/>
            <person name="Vertommen D."/>
            <person name="Veiga-da-Cunha M."/>
            <person name="Van Schaftingen E."/>
        </authorList>
    </citation>
    <scope>FUNCTION</scope>
    <scope>CATALYTIC ACTIVITY</scope>
    <scope>BIOPHYSICOCHEMICAL PROPERTIES</scope>
</reference>
<keyword id="KW-0067">ATP-binding</keyword>
<keyword id="KW-0418">Kinase</keyword>
<keyword id="KW-0547">Nucleotide-binding</keyword>
<keyword id="KW-1185">Reference proteome</keyword>
<keyword id="KW-0808">Transferase</keyword>
<feature type="chain" id="PRO_0000448292" description="Probable ketoamine kinase SAOUHSC_02908">
    <location>
        <begin position="1"/>
        <end position="288"/>
    </location>
</feature>
<feature type="active site" description="Proton acceptor" evidence="1">
    <location>
        <position position="191"/>
    </location>
</feature>
<feature type="binding site" evidence="2">
    <location>
        <begin position="86"/>
        <end position="88"/>
    </location>
    <ligand>
        <name>ATP</name>
        <dbReference type="ChEBI" id="CHEBI:30616"/>
    </ligand>
</feature>
<gene>
    <name evidence="5" type="ordered locus">SAOUHSC_02908</name>
</gene>
<dbReference type="EC" id="2.7.1.-" evidence="3"/>
<dbReference type="EMBL" id="CP000253">
    <property type="protein sequence ID" value="ABD31904.1"/>
    <property type="molecule type" value="Genomic_DNA"/>
</dbReference>
<dbReference type="RefSeq" id="WP_001005511.1">
    <property type="nucleotide sequence ID" value="NZ_LS483365.1"/>
</dbReference>
<dbReference type="RefSeq" id="YP_501361.1">
    <property type="nucleotide sequence ID" value="NC_007795.1"/>
</dbReference>
<dbReference type="SMR" id="Q2FV31"/>
<dbReference type="STRING" id="93061.SAOUHSC_02908"/>
<dbReference type="PaxDb" id="1280-SAXN108_2859"/>
<dbReference type="GeneID" id="3921360"/>
<dbReference type="KEGG" id="sao:SAOUHSC_02908"/>
<dbReference type="PATRIC" id="fig|93061.5.peg.2629"/>
<dbReference type="eggNOG" id="COG3001">
    <property type="taxonomic scope" value="Bacteria"/>
</dbReference>
<dbReference type="HOGENOM" id="CLU_036517_0_1_9"/>
<dbReference type="OrthoDB" id="5291879at2"/>
<dbReference type="Proteomes" id="UP000008816">
    <property type="component" value="Chromosome"/>
</dbReference>
<dbReference type="GO" id="GO:0005524">
    <property type="term" value="F:ATP binding"/>
    <property type="evidence" value="ECO:0007669"/>
    <property type="project" value="UniProtKB-KW"/>
</dbReference>
<dbReference type="GO" id="GO:0016301">
    <property type="term" value="F:kinase activity"/>
    <property type="evidence" value="ECO:0007669"/>
    <property type="project" value="UniProtKB-KW"/>
</dbReference>
<dbReference type="GO" id="GO:0016773">
    <property type="term" value="F:phosphotransferase activity, alcohol group as acceptor"/>
    <property type="evidence" value="ECO:0000314"/>
    <property type="project" value="UniProtKB"/>
</dbReference>
<dbReference type="GO" id="GO:0102193">
    <property type="term" value="F:protein-ribulosamine 3-kinase activity"/>
    <property type="evidence" value="ECO:0007669"/>
    <property type="project" value="RHEA"/>
</dbReference>
<dbReference type="FunFam" id="3.90.1200.10:FF:000027">
    <property type="entry name" value="Fructosamine kinase"/>
    <property type="match status" value="1"/>
</dbReference>
<dbReference type="Gene3D" id="3.90.1200.10">
    <property type="match status" value="1"/>
</dbReference>
<dbReference type="Gene3D" id="3.30.200.20">
    <property type="entry name" value="Phosphorylase Kinase, domain 1"/>
    <property type="match status" value="1"/>
</dbReference>
<dbReference type="InterPro" id="IPR016477">
    <property type="entry name" value="Fructo-/Ketosamine-3-kinase"/>
</dbReference>
<dbReference type="InterPro" id="IPR011009">
    <property type="entry name" value="Kinase-like_dom_sf"/>
</dbReference>
<dbReference type="PANTHER" id="PTHR12149">
    <property type="entry name" value="FRUCTOSAMINE 3 KINASE-RELATED PROTEIN"/>
    <property type="match status" value="1"/>
</dbReference>
<dbReference type="PANTHER" id="PTHR12149:SF8">
    <property type="entry name" value="PROTEIN-RIBULOSAMINE 3-KINASE"/>
    <property type="match status" value="1"/>
</dbReference>
<dbReference type="Pfam" id="PF03881">
    <property type="entry name" value="Fructosamin_kin"/>
    <property type="match status" value="1"/>
</dbReference>
<dbReference type="PIRSF" id="PIRSF006221">
    <property type="entry name" value="Ketosamine-3-kinase"/>
    <property type="match status" value="1"/>
</dbReference>
<dbReference type="SUPFAM" id="SSF56112">
    <property type="entry name" value="Protein kinase-like (PK-like)"/>
    <property type="match status" value="1"/>
</dbReference>
<name>KT3K_STAA8</name>
<protein>
    <recommendedName>
        <fullName>Probable ketoamine kinase SAOUHSC_02908</fullName>
        <ecNumber evidence="3">2.7.1.-</ecNumber>
    </recommendedName>
</protein>
<sequence length="288" mass="32988">MNEQWLEHLPLKDIKEISPVSGGDVNEAYRVETDTDTFFLLVQRGRKESFYAAEIAGLNEFERAGITAPRVIASGEVNGDAYLVMTYLEEGASGSQRQLGQLVAQLHSQQQEEGKFGFSLPYEGGDISFDNHWQDDWCTIFVDKRLDHLKDELLNRGLWDANDIKVYDKVRRQIVAELEKHQSKPSLLHGDLWGGNYMFLQDGRPALFDPAPLYGDREFDIGITTVFGGFTSEFYDAYNKHYPLAKGASYRLEFYRLYLLMVHLLKFGEMYRDSVAHSMDKILQDTTS</sequence>